<dbReference type="EMBL" id="CP000260">
    <property type="protein sequence ID" value="ABF34740.1"/>
    <property type="molecule type" value="Genomic_DNA"/>
</dbReference>
<dbReference type="RefSeq" id="WP_002982870.1">
    <property type="nucleotide sequence ID" value="NZ_CVUH01000011.1"/>
</dbReference>
<dbReference type="SMR" id="Q1JF19"/>
<dbReference type="GeneID" id="83705580"/>
<dbReference type="KEGG" id="sph:MGAS10270_Spy1675"/>
<dbReference type="HOGENOM" id="CLU_064548_7_1_9"/>
<dbReference type="Proteomes" id="UP000002436">
    <property type="component" value="Chromosome"/>
</dbReference>
<dbReference type="GO" id="GO:1990904">
    <property type="term" value="C:ribonucleoprotein complex"/>
    <property type="evidence" value="ECO:0007669"/>
    <property type="project" value="UniProtKB-KW"/>
</dbReference>
<dbReference type="GO" id="GO:0005840">
    <property type="term" value="C:ribosome"/>
    <property type="evidence" value="ECO:0007669"/>
    <property type="project" value="UniProtKB-KW"/>
</dbReference>
<dbReference type="GO" id="GO:0003735">
    <property type="term" value="F:structural constituent of ribosome"/>
    <property type="evidence" value="ECO:0007669"/>
    <property type="project" value="InterPro"/>
</dbReference>
<dbReference type="GO" id="GO:0006412">
    <property type="term" value="P:translation"/>
    <property type="evidence" value="ECO:0007669"/>
    <property type="project" value="UniProtKB-UniRule"/>
</dbReference>
<dbReference type="Gene3D" id="2.30.170.40">
    <property type="entry name" value="Ribosomal protein L28/L24"/>
    <property type="match status" value="1"/>
</dbReference>
<dbReference type="HAMAP" id="MF_00373">
    <property type="entry name" value="Ribosomal_bL28"/>
    <property type="match status" value="1"/>
</dbReference>
<dbReference type="InterPro" id="IPR050096">
    <property type="entry name" value="Bacterial_rp_bL28"/>
</dbReference>
<dbReference type="InterPro" id="IPR026569">
    <property type="entry name" value="Ribosomal_bL28"/>
</dbReference>
<dbReference type="InterPro" id="IPR034704">
    <property type="entry name" value="Ribosomal_bL28/bL31-like_sf"/>
</dbReference>
<dbReference type="InterPro" id="IPR001383">
    <property type="entry name" value="Ribosomal_bL28_bact-type"/>
</dbReference>
<dbReference type="InterPro" id="IPR037147">
    <property type="entry name" value="Ribosomal_bL28_sf"/>
</dbReference>
<dbReference type="NCBIfam" id="TIGR00009">
    <property type="entry name" value="L28"/>
    <property type="match status" value="1"/>
</dbReference>
<dbReference type="PANTHER" id="PTHR39080">
    <property type="entry name" value="50S RIBOSOMAL PROTEIN L28"/>
    <property type="match status" value="1"/>
</dbReference>
<dbReference type="PANTHER" id="PTHR39080:SF1">
    <property type="entry name" value="LARGE RIBOSOMAL SUBUNIT PROTEIN BL28A"/>
    <property type="match status" value="1"/>
</dbReference>
<dbReference type="Pfam" id="PF00830">
    <property type="entry name" value="Ribosomal_L28"/>
    <property type="match status" value="1"/>
</dbReference>
<dbReference type="SUPFAM" id="SSF143800">
    <property type="entry name" value="L28p-like"/>
    <property type="match status" value="1"/>
</dbReference>
<protein>
    <recommendedName>
        <fullName evidence="1">Large ribosomal subunit protein bL28</fullName>
    </recommendedName>
    <alternativeName>
        <fullName evidence="2">50S ribosomal protein L28</fullName>
    </alternativeName>
</protein>
<feature type="chain" id="PRO_1000007372" description="Large ribosomal subunit protein bL28">
    <location>
        <begin position="1"/>
        <end position="62"/>
    </location>
</feature>
<gene>
    <name evidence="1" type="primary">rpmB</name>
    <name type="ordered locus">MGAS10270_Spy1675</name>
</gene>
<sequence>MAKVCYFTGRKTVSGNNRSHAMNQTKRTVKPNLQKVTILVDGKPKKVWASARALKSGKVERI</sequence>
<organism>
    <name type="scientific">Streptococcus pyogenes serotype M2 (strain MGAS10270)</name>
    <dbReference type="NCBI Taxonomy" id="370552"/>
    <lineage>
        <taxon>Bacteria</taxon>
        <taxon>Bacillati</taxon>
        <taxon>Bacillota</taxon>
        <taxon>Bacilli</taxon>
        <taxon>Lactobacillales</taxon>
        <taxon>Streptococcaceae</taxon>
        <taxon>Streptococcus</taxon>
    </lineage>
</organism>
<name>RL28_STRPD</name>
<keyword id="KW-0687">Ribonucleoprotein</keyword>
<keyword id="KW-0689">Ribosomal protein</keyword>
<evidence type="ECO:0000255" key="1">
    <source>
        <dbReference type="HAMAP-Rule" id="MF_00373"/>
    </source>
</evidence>
<evidence type="ECO:0000305" key="2"/>
<reference key="1">
    <citation type="journal article" date="2006" name="Proc. Natl. Acad. Sci. U.S.A.">
        <title>Molecular genetic anatomy of inter- and intraserotype variation in the human bacterial pathogen group A Streptococcus.</title>
        <authorList>
            <person name="Beres S.B."/>
            <person name="Richter E.W."/>
            <person name="Nagiec M.J."/>
            <person name="Sumby P."/>
            <person name="Porcella S.F."/>
            <person name="DeLeo F.R."/>
            <person name="Musser J.M."/>
        </authorList>
    </citation>
    <scope>NUCLEOTIDE SEQUENCE [LARGE SCALE GENOMIC DNA]</scope>
    <source>
        <strain>MGAS10270</strain>
    </source>
</reference>
<comment type="similarity">
    <text evidence="1">Belongs to the bacterial ribosomal protein bL28 family.</text>
</comment>
<proteinExistence type="inferred from homology"/>
<accession>Q1JF19</accession>